<organism>
    <name type="scientific">Synechocystis sp. (strain PCC 6714)</name>
    <name type="common">Aphanocapsa sp. (strain PCC 6714)</name>
    <dbReference type="NCBI Taxonomy" id="1147"/>
    <lineage>
        <taxon>Bacteria</taxon>
        <taxon>Bacillati</taxon>
        <taxon>Cyanobacteriota</taxon>
        <taxon>Cyanophyceae</taxon>
        <taxon>Synechococcales</taxon>
        <taxon>Merismopediaceae</taxon>
        <taxon>Synechocystis</taxon>
    </lineage>
</organism>
<reference key="1">
    <citation type="journal article" date="1993" name="Plant Mol. Biol.">
        <title>Isolation and characterization of the genes encoding allophycocyanin subunits and two linker proteins from Synechocystis 6714.</title>
        <authorList>
            <person name="Dimagno L.M."/>
            <person name="Haselkorn R."/>
        </authorList>
    </citation>
    <scope>NUCLEOTIDE SEQUENCE [GENOMIC DNA]</scope>
</reference>
<feature type="chain" id="PRO_0000199106" description="Allophycocyanin beta chain">
    <location>
        <begin position="1"/>
        <end position="161"/>
    </location>
</feature>
<feature type="binding site" description="covalent" evidence="1">
    <location>
        <position position="81"/>
    </location>
    <ligand>
        <name>(2R,3E)-phycocyanobilin</name>
        <dbReference type="ChEBI" id="CHEBI:85275"/>
    </ligand>
</feature>
<feature type="modified residue" description="N4-methylasparagine" evidence="1">
    <location>
        <position position="71"/>
    </location>
</feature>
<keyword id="KW-0042">Antenna complex</keyword>
<keyword id="KW-0089">Bile pigment</keyword>
<keyword id="KW-0157">Chromophore</keyword>
<keyword id="KW-0249">Electron transport</keyword>
<keyword id="KW-0472">Membrane</keyword>
<keyword id="KW-0488">Methylation</keyword>
<keyword id="KW-0602">Photosynthesis</keyword>
<keyword id="KW-0605">Phycobilisome</keyword>
<keyword id="KW-0793">Thylakoid</keyword>
<keyword id="KW-0813">Transport</keyword>
<proteinExistence type="inferred from homology"/>
<gene>
    <name type="primary">apcB</name>
</gene>
<name>APCB_SYNY4</name>
<dbReference type="EMBL" id="L02308">
    <property type="protein sequence ID" value="AAA69683.1"/>
    <property type="molecule type" value="Genomic_DNA"/>
</dbReference>
<dbReference type="PIR" id="S33624">
    <property type="entry name" value="S33624"/>
</dbReference>
<dbReference type="RefSeq" id="WP_028948243.1">
    <property type="nucleotide sequence ID" value="NZ_CP007542.1"/>
</dbReference>
<dbReference type="SMR" id="Q02924"/>
<dbReference type="STRING" id="1147.D082_33980"/>
<dbReference type="eggNOG" id="ENOG502Z7X0">
    <property type="taxonomic scope" value="Bacteria"/>
</dbReference>
<dbReference type="OrthoDB" id="512145at2"/>
<dbReference type="GO" id="GO:0030089">
    <property type="term" value="C:phycobilisome"/>
    <property type="evidence" value="ECO:0007669"/>
    <property type="project" value="UniProtKB-KW"/>
</dbReference>
<dbReference type="GO" id="GO:0031676">
    <property type="term" value="C:plasma membrane-derived thylakoid membrane"/>
    <property type="evidence" value="ECO:0007669"/>
    <property type="project" value="UniProtKB-SubCell"/>
</dbReference>
<dbReference type="GO" id="GO:0015979">
    <property type="term" value="P:photosynthesis"/>
    <property type="evidence" value="ECO:0007669"/>
    <property type="project" value="UniProtKB-KW"/>
</dbReference>
<dbReference type="CDD" id="cd12126">
    <property type="entry name" value="APC_beta"/>
    <property type="match status" value="1"/>
</dbReference>
<dbReference type="Gene3D" id="1.10.490.20">
    <property type="entry name" value="Phycocyanins"/>
    <property type="match status" value="1"/>
</dbReference>
<dbReference type="InterPro" id="IPR006245">
    <property type="entry name" value="Allophycocyanin_b"/>
</dbReference>
<dbReference type="InterPro" id="IPR009050">
    <property type="entry name" value="Globin-like_sf"/>
</dbReference>
<dbReference type="InterPro" id="IPR012128">
    <property type="entry name" value="Phycobilisome_asu/bsu"/>
</dbReference>
<dbReference type="InterPro" id="IPR038719">
    <property type="entry name" value="Phycobilisome_asu/bsu_sf"/>
</dbReference>
<dbReference type="NCBIfam" id="TIGR01337">
    <property type="entry name" value="apcB"/>
    <property type="match status" value="1"/>
</dbReference>
<dbReference type="PANTHER" id="PTHR34011:SF3">
    <property type="entry name" value="ALLOPHYCOCYANIN BETA CHAIN"/>
    <property type="match status" value="1"/>
</dbReference>
<dbReference type="PANTHER" id="PTHR34011">
    <property type="entry name" value="PHYCOBILISOME 32.1 KDA LINKER POLYPEPTIDE, PHYCOCYANIN-ASSOCIATED, ROD 2-RELATED"/>
    <property type="match status" value="1"/>
</dbReference>
<dbReference type="Pfam" id="PF00502">
    <property type="entry name" value="Phycobilisome"/>
    <property type="match status" value="1"/>
</dbReference>
<dbReference type="PIRSF" id="PIRSF000081">
    <property type="entry name" value="Phycocyanin"/>
    <property type="match status" value="1"/>
</dbReference>
<dbReference type="SUPFAM" id="SSF46458">
    <property type="entry name" value="Globin-like"/>
    <property type="match status" value="1"/>
</dbReference>
<sequence length="161" mass="17243">MQDAITAVINSADVQGKYLDGAAMDKLKNYFASGELRVRAASVISANAATIVKEAVAKSLLYSDVTRPGGNMYTTRRYAACIRDLDYYLRYATYAMLAGDASILDERVLNGLKETYNSLGVPISSTVQAIQAIKEVTASLVGADAGKEMGVYLDYICSGLS</sequence>
<accession>Q02924</accession>
<evidence type="ECO:0000250" key="1"/>
<evidence type="ECO:0000305" key="2"/>
<comment type="function">
    <text>Light-harvesting photosynthetic bile pigment-protein from the phycobiliprotein complex. Allophycocyanin has a maximum absorption at approximately 650 nanometers.</text>
</comment>
<comment type="subunit">
    <text evidence="1">Heterodimer of an alpha and a beta chain.</text>
</comment>
<comment type="subcellular location">
    <subcellularLocation>
        <location evidence="1">Cellular thylakoid membrane</location>
        <topology evidence="1">Peripheral membrane protein</topology>
        <orientation evidence="1">Cytoplasmic side</orientation>
    </subcellularLocation>
    <text evidence="1">Forms the core of the phycobilisome.</text>
</comment>
<comment type="PTM">
    <text evidence="1">Contains one covalently linked phycocyanobilin chromophore.</text>
</comment>
<comment type="similarity">
    <text evidence="2">Belongs to the phycobiliprotein family.</text>
</comment>
<protein>
    <recommendedName>
        <fullName>Allophycocyanin beta chain</fullName>
    </recommendedName>
</protein>